<organism>
    <name type="scientific">Salmonella newport (strain SL254)</name>
    <dbReference type="NCBI Taxonomy" id="423368"/>
    <lineage>
        <taxon>Bacteria</taxon>
        <taxon>Pseudomonadati</taxon>
        <taxon>Pseudomonadota</taxon>
        <taxon>Gammaproteobacteria</taxon>
        <taxon>Enterobacterales</taxon>
        <taxon>Enterobacteriaceae</taxon>
        <taxon>Salmonella</taxon>
    </lineage>
</organism>
<name>ARNB_SALNS</name>
<comment type="function">
    <text evidence="1">Catalyzes the conversion of UDP-4-keto-arabinose (UDP-Ara4O) to UDP-4-amino-4-deoxy-L-arabinose (UDP-L-Ara4N). The modified arabinose is attached to lipid A and is required for resistance to polymyxin and cationic antimicrobial peptides.</text>
</comment>
<comment type="catalytic activity">
    <reaction evidence="1">
        <text>UDP-4-amino-4-deoxy-beta-L-arabinose + 2-oxoglutarate = UDP-beta-L-threo-pentopyranos-4-ulose + L-glutamate</text>
        <dbReference type="Rhea" id="RHEA:24710"/>
        <dbReference type="ChEBI" id="CHEBI:16810"/>
        <dbReference type="ChEBI" id="CHEBI:29985"/>
        <dbReference type="ChEBI" id="CHEBI:58708"/>
        <dbReference type="ChEBI" id="CHEBI:58710"/>
        <dbReference type="EC" id="2.6.1.87"/>
    </reaction>
</comment>
<comment type="cofactor">
    <cofactor evidence="1">
        <name>pyridoxal 5'-phosphate</name>
        <dbReference type="ChEBI" id="CHEBI:597326"/>
    </cofactor>
</comment>
<comment type="pathway">
    <text evidence="1">Nucleotide-sugar biosynthesis; UDP-4-deoxy-4-formamido-beta-L-arabinose biosynthesis; UDP-4-deoxy-4-formamido-beta-L-arabinose from UDP-alpha-D-glucuronate: step 2/3.</text>
</comment>
<comment type="pathway">
    <text evidence="1">Bacterial outer membrane biogenesis; lipopolysaccharide biosynthesis.</text>
</comment>
<comment type="subunit">
    <text evidence="1">Homodimer.</text>
</comment>
<comment type="similarity">
    <text evidence="1">Belongs to the DegT/DnrJ/EryC1 family. ArnB subfamily.</text>
</comment>
<comment type="sequence caution" evidence="2">
    <conflict type="erroneous initiation">
        <sequence resource="EMBL-CDS" id="ACF64713"/>
    </conflict>
</comment>
<gene>
    <name evidence="1" type="primary">arnB</name>
    <name type="ordered locus">SNSL254_A2482</name>
</gene>
<feature type="chain" id="PRO_0000380540" description="UDP-4-amino-4-deoxy-L-arabinose--oxoglutarate aminotransferase">
    <location>
        <begin position="1"/>
        <end position="379"/>
    </location>
</feature>
<feature type="modified residue" description="N6-(pyridoxal phosphate)lysine" evidence="1">
    <location>
        <position position="182"/>
    </location>
</feature>
<accession>B4SYW9</accession>
<reference key="1">
    <citation type="journal article" date="2011" name="J. Bacteriol.">
        <title>Comparative genomics of 28 Salmonella enterica isolates: evidence for CRISPR-mediated adaptive sublineage evolution.</title>
        <authorList>
            <person name="Fricke W.F."/>
            <person name="Mammel M.K."/>
            <person name="McDermott P.F."/>
            <person name="Tartera C."/>
            <person name="White D.G."/>
            <person name="Leclerc J.E."/>
            <person name="Ravel J."/>
            <person name="Cebula T.A."/>
        </authorList>
    </citation>
    <scope>NUCLEOTIDE SEQUENCE [LARGE SCALE GENOMIC DNA]</scope>
    <source>
        <strain>SL254</strain>
    </source>
</reference>
<proteinExistence type="inferred from homology"/>
<sequence length="379" mass="41165">MSDFLPFSRPAMGAEELAAVKTVLDSGWITTGPKNQELEAAFCRLTGNQYAVAVSSATAGMHIALMALGIGEGDEVITPSMTWVSTLNMIVLLGANPVMVDVDRDTLMVTPEHIEAAITPQTKAIIPVHYAGAPADLDAIYALGERYGIPVIEDAAHATGTSYKGRHIGARGTAIFSFHAIKNITCAEGGIVVTDNPQFADKLRSLKFHGLGVDAWDRQSGGRAPQAEVLAPGYKYNLPDLNAAIALAQLQKLDALNARRAAIAAQYHQAMADLPFQPLSLPSWEHIHAWHLFIIRVDEARCGITRDALMASLKTKGIGTGLHFRAAHTQKYYRERFPTLTLPDTEWNSERICSLPLFPDMTESDFDRVITALHQIAGQ</sequence>
<protein>
    <recommendedName>
        <fullName evidence="1">UDP-4-amino-4-deoxy-L-arabinose--oxoglutarate aminotransferase</fullName>
        <ecNumber evidence="1">2.6.1.87</ecNumber>
    </recommendedName>
    <alternativeName>
        <fullName evidence="1">UDP-(beta-L-threo-pentapyranosyl-4''-ulose diphosphate) aminotransferase</fullName>
        <shortName evidence="1">UDP-Ara4O aminotransferase</shortName>
    </alternativeName>
    <alternativeName>
        <fullName evidence="1">UDP-4-amino-4-deoxy-L-arabinose aminotransferase</fullName>
    </alternativeName>
</protein>
<evidence type="ECO:0000255" key="1">
    <source>
        <dbReference type="HAMAP-Rule" id="MF_01167"/>
    </source>
</evidence>
<evidence type="ECO:0000305" key="2"/>
<dbReference type="EC" id="2.6.1.87" evidence="1"/>
<dbReference type="EMBL" id="CP001113">
    <property type="protein sequence ID" value="ACF64713.1"/>
    <property type="status" value="ALT_INIT"/>
    <property type="molecule type" value="Genomic_DNA"/>
</dbReference>
<dbReference type="RefSeq" id="WP_001279284.1">
    <property type="nucleotide sequence ID" value="NZ_CCMR01000001.1"/>
</dbReference>
<dbReference type="SMR" id="B4SYW9"/>
<dbReference type="KEGG" id="see:SNSL254_A2482"/>
<dbReference type="HOGENOM" id="CLU_033332_0_3_6"/>
<dbReference type="UniPathway" id="UPA00030"/>
<dbReference type="UniPathway" id="UPA00032">
    <property type="reaction ID" value="UER00493"/>
</dbReference>
<dbReference type="Proteomes" id="UP000008824">
    <property type="component" value="Chromosome"/>
</dbReference>
<dbReference type="GO" id="GO:0016020">
    <property type="term" value="C:membrane"/>
    <property type="evidence" value="ECO:0007669"/>
    <property type="project" value="GOC"/>
</dbReference>
<dbReference type="GO" id="GO:0030170">
    <property type="term" value="F:pyridoxal phosphate binding"/>
    <property type="evidence" value="ECO:0007669"/>
    <property type="project" value="TreeGrafter"/>
</dbReference>
<dbReference type="GO" id="GO:0099620">
    <property type="term" value="F:UDP-4-amino-4-deoxy-L-arabinose aminotransferase"/>
    <property type="evidence" value="ECO:0007669"/>
    <property type="project" value="UniProtKB-EC"/>
</dbReference>
<dbReference type="GO" id="GO:0009245">
    <property type="term" value="P:lipid A biosynthetic process"/>
    <property type="evidence" value="ECO:0007669"/>
    <property type="project" value="UniProtKB-KW"/>
</dbReference>
<dbReference type="GO" id="GO:0009103">
    <property type="term" value="P:lipopolysaccharide biosynthetic process"/>
    <property type="evidence" value="ECO:0007669"/>
    <property type="project" value="UniProtKB-UniRule"/>
</dbReference>
<dbReference type="GO" id="GO:0046677">
    <property type="term" value="P:response to antibiotic"/>
    <property type="evidence" value="ECO:0007669"/>
    <property type="project" value="UniProtKB-KW"/>
</dbReference>
<dbReference type="CDD" id="cd00616">
    <property type="entry name" value="AHBA_syn"/>
    <property type="match status" value="1"/>
</dbReference>
<dbReference type="FunFam" id="3.40.640.10:FF:000040">
    <property type="entry name" value="UDP-4-amino-4-deoxy-L-arabinose--oxoglutarate aminotransferase"/>
    <property type="match status" value="1"/>
</dbReference>
<dbReference type="FunFam" id="3.90.1150.10:FF:000030">
    <property type="entry name" value="UDP-4-amino-4-deoxy-L-arabinose--oxoglutarate aminotransferase"/>
    <property type="match status" value="1"/>
</dbReference>
<dbReference type="Gene3D" id="3.90.1150.10">
    <property type="entry name" value="Aspartate Aminotransferase, domain 1"/>
    <property type="match status" value="1"/>
</dbReference>
<dbReference type="Gene3D" id="3.40.640.10">
    <property type="entry name" value="Type I PLP-dependent aspartate aminotransferase-like (Major domain)"/>
    <property type="match status" value="1"/>
</dbReference>
<dbReference type="HAMAP" id="MF_01167">
    <property type="entry name" value="ArnB_transfer"/>
    <property type="match status" value="1"/>
</dbReference>
<dbReference type="InterPro" id="IPR022850">
    <property type="entry name" value="ArnB_NH2Trfase"/>
</dbReference>
<dbReference type="InterPro" id="IPR000653">
    <property type="entry name" value="DegT/StrS_aminotransferase"/>
</dbReference>
<dbReference type="InterPro" id="IPR015424">
    <property type="entry name" value="PyrdxlP-dep_Trfase"/>
</dbReference>
<dbReference type="InterPro" id="IPR015421">
    <property type="entry name" value="PyrdxlP-dep_Trfase_major"/>
</dbReference>
<dbReference type="InterPro" id="IPR015422">
    <property type="entry name" value="PyrdxlP-dep_Trfase_small"/>
</dbReference>
<dbReference type="NCBIfam" id="NF008658">
    <property type="entry name" value="PRK11658.1"/>
    <property type="match status" value="1"/>
</dbReference>
<dbReference type="PANTHER" id="PTHR30244">
    <property type="entry name" value="TRANSAMINASE"/>
    <property type="match status" value="1"/>
</dbReference>
<dbReference type="PANTHER" id="PTHR30244:SF41">
    <property type="entry name" value="UDP-4-AMINO-4-DEOXY-L-ARABINOSE--OXOGLUTARATE AMINOTRANSFERASE"/>
    <property type="match status" value="1"/>
</dbReference>
<dbReference type="Pfam" id="PF01041">
    <property type="entry name" value="DegT_DnrJ_EryC1"/>
    <property type="match status" value="1"/>
</dbReference>
<dbReference type="PIRSF" id="PIRSF000390">
    <property type="entry name" value="PLP_StrS"/>
    <property type="match status" value="1"/>
</dbReference>
<dbReference type="SUPFAM" id="SSF53383">
    <property type="entry name" value="PLP-dependent transferases"/>
    <property type="match status" value="1"/>
</dbReference>
<keyword id="KW-0032">Aminotransferase</keyword>
<keyword id="KW-0046">Antibiotic resistance</keyword>
<keyword id="KW-0441">Lipid A biosynthesis</keyword>
<keyword id="KW-0444">Lipid biosynthesis</keyword>
<keyword id="KW-0443">Lipid metabolism</keyword>
<keyword id="KW-0448">Lipopolysaccharide biosynthesis</keyword>
<keyword id="KW-0663">Pyridoxal phosphate</keyword>
<keyword id="KW-0808">Transferase</keyword>